<feature type="chain" id="PRO_0000029809" description="Phosphatidylserine decarboxylase beta chain" evidence="1">
    <location>
        <begin position="1"/>
        <end position="184"/>
    </location>
</feature>
<feature type="chain" id="PRO_0000029810" description="Phosphatidylserine decarboxylase alpha chain" evidence="1">
    <location>
        <begin position="185"/>
        <end position="215"/>
    </location>
</feature>
<feature type="active site" description="Schiff-base intermediate with substrate; via pyruvic acid" evidence="1">
    <location>
        <position position="185"/>
    </location>
</feature>
<feature type="site" description="Cleavage (non-hydrolytic); by autocatalysis" evidence="1">
    <location>
        <begin position="184"/>
        <end position="185"/>
    </location>
</feature>
<feature type="modified residue" description="Pyruvic acid (Ser); by autocatalysis" evidence="1">
    <location>
        <position position="185"/>
    </location>
</feature>
<dbReference type="EC" id="4.1.1.65" evidence="1"/>
<dbReference type="EMBL" id="BA000030">
    <property type="protein sequence ID" value="BAC69627.1"/>
    <property type="molecule type" value="Genomic_DNA"/>
</dbReference>
<dbReference type="RefSeq" id="WP_010983355.1">
    <property type="nucleotide sequence ID" value="NZ_JZJK01000086.1"/>
</dbReference>
<dbReference type="SMR" id="Q82LU4"/>
<dbReference type="GeneID" id="41539016"/>
<dbReference type="KEGG" id="sma:SAVERM_1916"/>
<dbReference type="eggNOG" id="COG0688">
    <property type="taxonomic scope" value="Bacteria"/>
</dbReference>
<dbReference type="HOGENOM" id="CLU_072492_1_0_11"/>
<dbReference type="OrthoDB" id="9790893at2"/>
<dbReference type="UniPathway" id="UPA00558">
    <property type="reaction ID" value="UER00616"/>
</dbReference>
<dbReference type="Proteomes" id="UP000000428">
    <property type="component" value="Chromosome"/>
</dbReference>
<dbReference type="GO" id="GO:0005886">
    <property type="term" value="C:plasma membrane"/>
    <property type="evidence" value="ECO:0007669"/>
    <property type="project" value="UniProtKB-SubCell"/>
</dbReference>
<dbReference type="GO" id="GO:0004609">
    <property type="term" value="F:phosphatidylserine decarboxylase activity"/>
    <property type="evidence" value="ECO:0007669"/>
    <property type="project" value="UniProtKB-UniRule"/>
</dbReference>
<dbReference type="GO" id="GO:0006646">
    <property type="term" value="P:phosphatidylethanolamine biosynthetic process"/>
    <property type="evidence" value="ECO:0007669"/>
    <property type="project" value="UniProtKB-UniRule"/>
</dbReference>
<dbReference type="HAMAP" id="MF_00664">
    <property type="entry name" value="PS_decarb_PSD_A"/>
    <property type="match status" value="1"/>
</dbReference>
<dbReference type="InterPro" id="IPR003817">
    <property type="entry name" value="PS_Dcarbxylase"/>
</dbReference>
<dbReference type="InterPro" id="IPR033175">
    <property type="entry name" value="PSD-A"/>
</dbReference>
<dbReference type="NCBIfam" id="NF003683">
    <property type="entry name" value="PRK05305.2-3"/>
    <property type="match status" value="1"/>
</dbReference>
<dbReference type="NCBIfam" id="NF003685">
    <property type="entry name" value="PRK05305.2-5"/>
    <property type="match status" value="1"/>
</dbReference>
<dbReference type="PANTHER" id="PTHR35809">
    <property type="entry name" value="ARCHAETIDYLSERINE DECARBOXYLASE PROENZYME-RELATED"/>
    <property type="match status" value="1"/>
</dbReference>
<dbReference type="PANTHER" id="PTHR35809:SF1">
    <property type="entry name" value="ARCHAETIDYLSERINE DECARBOXYLASE PROENZYME-RELATED"/>
    <property type="match status" value="1"/>
</dbReference>
<dbReference type="Pfam" id="PF02666">
    <property type="entry name" value="PS_Dcarbxylase"/>
    <property type="match status" value="1"/>
</dbReference>
<evidence type="ECO:0000255" key="1">
    <source>
        <dbReference type="HAMAP-Rule" id="MF_00664"/>
    </source>
</evidence>
<sequence length="215" mass="23338">MPHSQTSAPRGRVRLARGASPWLLPTVATAALSLVRARRSGAAKAVAVPATALAAGMLWFFRDPEREITQGRVISPADGVVQSIMPWKDGRTRVAIFMSPLNVHVNRAPLSGTVTSVEHIPGGFVPAFNKESENNERVVWHFDTELGDIEMIQIAGAVARRIVPYVPQGTKVEQGDRIGLIRFGSRVDIYLPEGVDVDVEVGQKTVAGVTRIDRD</sequence>
<reference key="1">
    <citation type="journal article" date="2001" name="Proc. Natl. Acad. Sci. U.S.A.">
        <title>Genome sequence of an industrial microorganism Streptomyces avermitilis: deducing the ability of producing secondary metabolites.</title>
        <authorList>
            <person name="Omura S."/>
            <person name="Ikeda H."/>
            <person name="Ishikawa J."/>
            <person name="Hanamoto A."/>
            <person name="Takahashi C."/>
            <person name="Shinose M."/>
            <person name="Takahashi Y."/>
            <person name="Horikawa H."/>
            <person name="Nakazawa H."/>
            <person name="Osonoe T."/>
            <person name="Kikuchi H."/>
            <person name="Shiba T."/>
            <person name="Sakaki Y."/>
            <person name="Hattori M."/>
        </authorList>
    </citation>
    <scope>NUCLEOTIDE SEQUENCE [LARGE SCALE GENOMIC DNA]</scope>
    <source>
        <strain>ATCC 31267 / DSM 46492 / JCM 5070 / NBRC 14893 / NCIMB 12804 / NRRL 8165 / MA-4680</strain>
    </source>
</reference>
<reference key="2">
    <citation type="journal article" date="2003" name="Nat. Biotechnol.">
        <title>Complete genome sequence and comparative analysis of the industrial microorganism Streptomyces avermitilis.</title>
        <authorList>
            <person name="Ikeda H."/>
            <person name="Ishikawa J."/>
            <person name="Hanamoto A."/>
            <person name="Shinose M."/>
            <person name="Kikuchi H."/>
            <person name="Shiba T."/>
            <person name="Sakaki Y."/>
            <person name="Hattori M."/>
            <person name="Omura S."/>
        </authorList>
    </citation>
    <scope>NUCLEOTIDE SEQUENCE [LARGE SCALE GENOMIC DNA]</scope>
    <source>
        <strain>ATCC 31267 / DSM 46492 / JCM 5070 / NBRC 14893 / NCIMB 12804 / NRRL 8165 / MA-4680</strain>
    </source>
</reference>
<keyword id="KW-1003">Cell membrane</keyword>
<keyword id="KW-0210">Decarboxylase</keyword>
<keyword id="KW-0444">Lipid biosynthesis</keyword>
<keyword id="KW-0443">Lipid metabolism</keyword>
<keyword id="KW-0456">Lyase</keyword>
<keyword id="KW-0472">Membrane</keyword>
<keyword id="KW-0594">Phospholipid biosynthesis</keyword>
<keyword id="KW-1208">Phospholipid metabolism</keyword>
<keyword id="KW-0670">Pyruvate</keyword>
<keyword id="KW-1185">Reference proteome</keyword>
<keyword id="KW-0865">Zymogen</keyword>
<comment type="function">
    <text evidence="1">Catalyzes the formation of phosphatidylethanolamine (PtdEtn) from phosphatidylserine (PtdSer).</text>
</comment>
<comment type="catalytic activity">
    <reaction evidence="1">
        <text>a 1,2-diacyl-sn-glycero-3-phospho-L-serine + H(+) = a 1,2-diacyl-sn-glycero-3-phosphoethanolamine + CO2</text>
        <dbReference type="Rhea" id="RHEA:20828"/>
        <dbReference type="ChEBI" id="CHEBI:15378"/>
        <dbReference type="ChEBI" id="CHEBI:16526"/>
        <dbReference type="ChEBI" id="CHEBI:57262"/>
        <dbReference type="ChEBI" id="CHEBI:64612"/>
        <dbReference type="EC" id="4.1.1.65"/>
    </reaction>
</comment>
<comment type="cofactor">
    <cofactor evidence="1">
        <name>pyruvate</name>
        <dbReference type="ChEBI" id="CHEBI:15361"/>
    </cofactor>
    <text evidence="1">Binds 1 pyruvoyl group covalently per subunit.</text>
</comment>
<comment type="pathway">
    <text evidence="1">Phospholipid metabolism; phosphatidylethanolamine biosynthesis; phosphatidylethanolamine from CDP-diacylglycerol: step 2/2.</text>
</comment>
<comment type="subunit">
    <text evidence="1">Heterodimer of a large membrane-associated beta subunit and a small pyruvoyl-containing alpha subunit.</text>
</comment>
<comment type="subcellular location">
    <subcellularLocation>
        <location evidence="1">Cell membrane</location>
        <topology evidence="1">Peripheral membrane protein</topology>
    </subcellularLocation>
</comment>
<comment type="PTM">
    <text evidence="1">Is synthesized initially as an inactive proenzyme. Formation of the active enzyme involves a self-maturation process in which the active site pyruvoyl group is generated from an internal serine residue via an autocatalytic post-translational modification. Two non-identical subunits are generated from the proenzyme in this reaction, and the pyruvate is formed at the N-terminus of the alpha chain, which is derived from the carboxyl end of the proenzyme. The post-translation cleavage follows an unusual pathway, termed non-hydrolytic serinolysis, in which the side chain hydroxyl group of the serine supplies its oxygen atom to form the C-terminus of the beta chain, while the remainder of the serine residue undergoes an oxidative deamination to produce ammonia and the pyruvoyl prosthetic group on the alpha chain.</text>
</comment>
<comment type="similarity">
    <text evidence="1">Belongs to the phosphatidylserine decarboxylase family. PSD-A subfamily.</text>
</comment>
<proteinExistence type="inferred from homology"/>
<gene>
    <name evidence="1" type="primary">psd</name>
    <name type="ordered locus">SAV_1916</name>
</gene>
<protein>
    <recommendedName>
        <fullName evidence="1">Phosphatidylserine decarboxylase proenzyme</fullName>
        <ecNumber evidence="1">4.1.1.65</ecNumber>
    </recommendedName>
    <component>
        <recommendedName>
            <fullName evidence="1">Phosphatidylserine decarboxylase alpha chain</fullName>
        </recommendedName>
    </component>
    <component>
        <recommendedName>
            <fullName evidence="1">Phosphatidylserine decarboxylase beta chain</fullName>
        </recommendedName>
    </component>
</protein>
<name>PSD_STRAW</name>
<organism>
    <name type="scientific">Streptomyces avermitilis (strain ATCC 31267 / DSM 46492 / JCM 5070 / NBRC 14893 / NCIMB 12804 / NRRL 8165 / MA-4680)</name>
    <dbReference type="NCBI Taxonomy" id="227882"/>
    <lineage>
        <taxon>Bacteria</taxon>
        <taxon>Bacillati</taxon>
        <taxon>Actinomycetota</taxon>
        <taxon>Actinomycetes</taxon>
        <taxon>Kitasatosporales</taxon>
        <taxon>Streptomycetaceae</taxon>
        <taxon>Streptomyces</taxon>
    </lineage>
</organism>
<accession>Q82LU4</accession>